<gene>
    <name evidence="1" type="primary">cmoB</name>
    <name type="ordered locus">DP3091</name>
</gene>
<name>CMOB_DESPS</name>
<dbReference type="EC" id="2.5.1.-" evidence="1"/>
<dbReference type="EMBL" id="CR522870">
    <property type="protein sequence ID" value="CAG37820.1"/>
    <property type="molecule type" value="Genomic_DNA"/>
</dbReference>
<dbReference type="RefSeq" id="WP_011190332.1">
    <property type="nucleotide sequence ID" value="NC_006138.1"/>
</dbReference>
<dbReference type="SMR" id="Q6AIL0"/>
<dbReference type="STRING" id="177439.DP3091"/>
<dbReference type="KEGG" id="dps:DP3091"/>
<dbReference type="eggNOG" id="COG0500">
    <property type="taxonomic scope" value="Bacteria"/>
</dbReference>
<dbReference type="HOGENOM" id="CLU_052665_1_0_7"/>
<dbReference type="OrthoDB" id="9765084at2"/>
<dbReference type="Proteomes" id="UP000000602">
    <property type="component" value="Chromosome"/>
</dbReference>
<dbReference type="GO" id="GO:0016765">
    <property type="term" value="F:transferase activity, transferring alkyl or aryl (other than methyl) groups"/>
    <property type="evidence" value="ECO:0007669"/>
    <property type="project" value="InterPro"/>
</dbReference>
<dbReference type="GO" id="GO:0002098">
    <property type="term" value="P:tRNA wobble uridine modification"/>
    <property type="evidence" value="ECO:0007669"/>
    <property type="project" value="InterPro"/>
</dbReference>
<dbReference type="CDD" id="cd02440">
    <property type="entry name" value="AdoMet_MTases"/>
    <property type="match status" value="1"/>
</dbReference>
<dbReference type="Gene3D" id="3.40.50.150">
    <property type="entry name" value="Vaccinia Virus protein VP39"/>
    <property type="match status" value="1"/>
</dbReference>
<dbReference type="HAMAP" id="MF_01590">
    <property type="entry name" value="tRNA_carboxymethyltr_CmoB"/>
    <property type="match status" value="1"/>
</dbReference>
<dbReference type="InterPro" id="IPR010017">
    <property type="entry name" value="CmoB"/>
</dbReference>
<dbReference type="InterPro" id="IPR027555">
    <property type="entry name" value="Mo5U34_MeTrfas-like"/>
</dbReference>
<dbReference type="InterPro" id="IPR029063">
    <property type="entry name" value="SAM-dependent_MTases_sf"/>
</dbReference>
<dbReference type="NCBIfam" id="NF011650">
    <property type="entry name" value="PRK15068.1"/>
    <property type="match status" value="1"/>
</dbReference>
<dbReference type="NCBIfam" id="TIGR00452">
    <property type="entry name" value="tRNA 5-methoxyuridine(34)/uridine 5-oxyacetic acid(34) synthase CmoB"/>
    <property type="match status" value="1"/>
</dbReference>
<dbReference type="PANTHER" id="PTHR43861">
    <property type="entry name" value="TRANS-ACONITATE 2-METHYLTRANSFERASE-RELATED"/>
    <property type="match status" value="1"/>
</dbReference>
<dbReference type="Pfam" id="PF08003">
    <property type="entry name" value="Methyltransf_9"/>
    <property type="match status" value="1"/>
</dbReference>
<dbReference type="SUPFAM" id="SSF53335">
    <property type="entry name" value="S-adenosyl-L-methionine-dependent methyltransferases"/>
    <property type="match status" value="1"/>
</dbReference>
<sequence>MKYLKHLSDAADREAIKALHDERQTWVNQEKKGFLRYREPYLQLARFKADSINLENDVVTIGHGEQISHEEQAEIRQALRAYMPWRKGPFAVFGVDIDAEWRSERKWQRLEKHLPDLKGKVIADIGCNNGYYMFRMAAQEPAFVLGIEPSVQHYYCFKALEEMSGLTNLEIDLLGVEHLPLFTESFDVVFLMGIIYHRSAPIETLRAVLDSLKPGGTLILETQGIPGEQPYALFPDKTYAKVPGTYFVPSASCLINWMHKAGFIDVDLFCDHPMSPEEQRQTEWMEFESYKDFLDPENPELTLEGYPAPHRFFVKATKKM</sequence>
<reference key="1">
    <citation type="journal article" date="2004" name="Environ. Microbiol.">
        <title>The genome of Desulfotalea psychrophila, a sulfate-reducing bacterium from permanently cold Arctic sediments.</title>
        <authorList>
            <person name="Rabus R."/>
            <person name="Ruepp A."/>
            <person name="Frickey T."/>
            <person name="Rattei T."/>
            <person name="Fartmann B."/>
            <person name="Stark M."/>
            <person name="Bauer M."/>
            <person name="Zibat A."/>
            <person name="Lombardot T."/>
            <person name="Becker I."/>
            <person name="Amann J."/>
            <person name="Gellner K."/>
            <person name="Teeling H."/>
            <person name="Leuschner W.D."/>
            <person name="Gloeckner F.-O."/>
            <person name="Lupas A.N."/>
            <person name="Amann R."/>
            <person name="Klenk H.-P."/>
        </authorList>
    </citation>
    <scope>NUCLEOTIDE SEQUENCE [LARGE SCALE GENOMIC DNA]</scope>
    <source>
        <strain>DSM 12343 / LSv54</strain>
    </source>
</reference>
<organism>
    <name type="scientific">Desulfotalea psychrophila (strain LSv54 / DSM 12343)</name>
    <dbReference type="NCBI Taxonomy" id="177439"/>
    <lineage>
        <taxon>Bacteria</taxon>
        <taxon>Pseudomonadati</taxon>
        <taxon>Thermodesulfobacteriota</taxon>
        <taxon>Desulfobulbia</taxon>
        <taxon>Desulfobulbales</taxon>
        <taxon>Desulfocapsaceae</taxon>
        <taxon>Desulfotalea</taxon>
    </lineage>
</organism>
<accession>Q6AIL0</accession>
<feature type="chain" id="PRO_0000313911" description="tRNA U34 carboxymethyltransferase">
    <location>
        <begin position="1"/>
        <end position="320"/>
    </location>
</feature>
<feature type="binding site" evidence="1">
    <location>
        <position position="87"/>
    </location>
    <ligand>
        <name>carboxy-S-adenosyl-L-methionine</name>
        <dbReference type="ChEBI" id="CHEBI:134278"/>
    </ligand>
</feature>
<feature type="binding site" evidence="1">
    <location>
        <position position="101"/>
    </location>
    <ligand>
        <name>carboxy-S-adenosyl-L-methionine</name>
        <dbReference type="ChEBI" id="CHEBI:134278"/>
    </ligand>
</feature>
<feature type="binding site" evidence="1">
    <location>
        <position position="106"/>
    </location>
    <ligand>
        <name>carboxy-S-adenosyl-L-methionine</name>
        <dbReference type="ChEBI" id="CHEBI:134278"/>
    </ligand>
</feature>
<feature type="binding site" evidence="1">
    <location>
        <position position="126"/>
    </location>
    <ligand>
        <name>carboxy-S-adenosyl-L-methionine</name>
        <dbReference type="ChEBI" id="CHEBI:134278"/>
    </ligand>
</feature>
<feature type="binding site" evidence="1">
    <location>
        <begin position="148"/>
        <end position="150"/>
    </location>
    <ligand>
        <name>carboxy-S-adenosyl-L-methionine</name>
        <dbReference type="ChEBI" id="CHEBI:134278"/>
    </ligand>
</feature>
<feature type="binding site" evidence="1">
    <location>
        <begin position="176"/>
        <end position="177"/>
    </location>
    <ligand>
        <name>carboxy-S-adenosyl-L-methionine</name>
        <dbReference type="ChEBI" id="CHEBI:134278"/>
    </ligand>
</feature>
<feature type="binding site" evidence="1">
    <location>
        <position position="192"/>
    </location>
    <ligand>
        <name>carboxy-S-adenosyl-L-methionine</name>
        <dbReference type="ChEBI" id="CHEBI:134278"/>
    </ligand>
</feature>
<feature type="binding site" evidence="1">
    <location>
        <position position="196"/>
    </location>
    <ligand>
        <name>carboxy-S-adenosyl-L-methionine</name>
        <dbReference type="ChEBI" id="CHEBI:134278"/>
    </ligand>
</feature>
<feature type="binding site" evidence="1">
    <location>
        <position position="311"/>
    </location>
    <ligand>
        <name>carboxy-S-adenosyl-L-methionine</name>
        <dbReference type="ChEBI" id="CHEBI:134278"/>
    </ligand>
</feature>
<evidence type="ECO:0000255" key="1">
    <source>
        <dbReference type="HAMAP-Rule" id="MF_01590"/>
    </source>
</evidence>
<comment type="function">
    <text evidence="1">Catalyzes carboxymethyl transfer from carboxy-S-adenosyl-L-methionine (Cx-SAM) to 5-hydroxyuridine (ho5U) to form 5-carboxymethoxyuridine (cmo5U) at position 34 in tRNAs.</text>
</comment>
<comment type="catalytic activity">
    <reaction evidence="1">
        <text>carboxy-S-adenosyl-L-methionine + 5-hydroxyuridine(34) in tRNA = 5-carboxymethoxyuridine(34) in tRNA + S-adenosyl-L-homocysteine + H(+)</text>
        <dbReference type="Rhea" id="RHEA:52848"/>
        <dbReference type="Rhea" id="RHEA-COMP:13381"/>
        <dbReference type="Rhea" id="RHEA-COMP:13383"/>
        <dbReference type="ChEBI" id="CHEBI:15378"/>
        <dbReference type="ChEBI" id="CHEBI:57856"/>
        <dbReference type="ChEBI" id="CHEBI:134278"/>
        <dbReference type="ChEBI" id="CHEBI:136877"/>
        <dbReference type="ChEBI" id="CHEBI:136879"/>
    </reaction>
</comment>
<comment type="subunit">
    <text evidence="1">Homotetramer.</text>
</comment>
<comment type="similarity">
    <text evidence="1">Belongs to the class I-like SAM-binding methyltransferase superfamily. CmoB family.</text>
</comment>
<proteinExistence type="inferred from homology"/>
<keyword id="KW-1185">Reference proteome</keyword>
<keyword id="KW-0808">Transferase</keyword>
<keyword id="KW-0819">tRNA processing</keyword>
<protein>
    <recommendedName>
        <fullName evidence="1">tRNA U34 carboxymethyltransferase</fullName>
        <ecNumber evidence="1">2.5.1.-</ecNumber>
    </recommendedName>
</protein>